<name>HYPB_ECOLI</name>
<comment type="function">
    <text evidence="5 6 7 8 9">Involved in the maturation of [NiFe] hydrogenases. Required for nickel insertion into the metal center of the hydrogenase (PubMed:7601092, PubMed:8756471). Exhibits a low intrinsic GTPase activity, which is essential for nickel insertion (PubMed:21544686, PubMed:27951644, PubMed:7601092). In the presence of GDP, nickel, but not zinc, is transferred from the HypB GTPase domain (G-domain) to HypA (PubMed:23899293, PubMed:27951644).</text>
</comment>
<comment type="activity regulation">
    <text evidence="5 7">Binding of zinc or nickel in the G-domain decreases GTPase activity (PubMed:21544686). Once GTP hydrolysis is triggered, probably via a GTPase activating protein, the GDP-loaded state may enhance HypA-HypB complex formation and reduces the affinity of HypB for nickel, which is then transferred to HypA (PubMed:27951644). In contrast to nickel, zinc reduces the formation of complexes with HypA (PubMed:27951644).</text>
</comment>
<comment type="biophysicochemical properties">
    <kinetics>
        <text evidence="5">kcat is 0.18 min(-1) for GTPase activity. kcat is 0.04 min(1) for GTPase activity in the presence of 1 uM Zn(II). kcat is 0.10 min(-1) for GTPase activity in the presence of 10 uM Ni(II).</text>
    </kinetics>
</comment>
<comment type="subunit">
    <text evidence="1 2 5 6">Monomer (PubMed:21544686). Can form homodimers, but dimerization does not have a critical role in the hydrogenase maturation pathway (PubMed:21544686). Forms complexes with HypA and SlyD (PubMed:15569666, PubMed:15995183, PubMed:23899293).</text>
</comment>
<comment type="interaction">
    <interactant intactId="EBI-558261">
        <id>P0AAN3</id>
    </interactant>
    <interactant intactId="EBI-6290024">
        <id>P0A700</id>
        <label>hypA</label>
    </interactant>
    <organismsDiffer>false</organismsDiffer>
    <experiments>9</experiments>
</comment>
<comment type="interaction">
    <interactant intactId="EBI-558261">
        <id>P0AAN3</id>
    </interactant>
    <interactant intactId="EBI-369251">
        <id>P0A9K9</id>
        <label>slyD</label>
    </interactant>
    <organismsDiffer>false</organismsDiffer>
    <experiments>6</experiments>
</comment>
<comment type="domain">
    <text evidence="3 4">The N-terminal region contains a high-affinity nickel-binding site and the C-terminal G-domain contains a low-affinity metal-binding site, which is not selective for nickel and could possibly accommodate other divalent metals (PubMed:16142921, PubMed:18942856). Both metal sites are critical for the maturation of the hydrogenases (PubMed:18942856).</text>
</comment>
<comment type="similarity">
    <text evidence="10">Belongs to the SIMIBI class G3E GTPase family. HypB/HupM subfamily.</text>
</comment>
<evidence type="ECO:0000269" key="1">
    <source>
    </source>
</evidence>
<evidence type="ECO:0000269" key="2">
    <source>
    </source>
</evidence>
<evidence type="ECO:0000269" key="3">
    <source>
    </source>
</evidence>
<evidence type="ECO:0000269" key="4">
    <source>
    </source>
</evidence>
<evidence type="ECO:0000269" key="5">
    <source>
    </source>
</evidence>
<evidence type="ECO:0000269" key="6">
    <source>
    </source>
</evidence>
<evidence type="ECO:0000269" key="7">
    <source>
    </source>
</evidence>
<evidence type="ECO:0000269" key="8">
    <source>
    </source>
</evidence>
<evidence type="ECO:0000269" key="9">
    <source>
    </source>
</evidence>
<evidence type="ECO:0000305" key="10"/>
<evidence type="ECO:0000305" key="11">
    <source>
    </source>
</evidence>
<evidence type="ECO:0000305" key="12">
    <source>
    </source>
</evidence>
<sequence length="290" mass="31565">MCTTCGCGEGNLYIEGDEHNPHSAFRSAPFAPAARPKMKITGIKAPEFTPSQTEEGDLHYGHGEAGTHAPGMSQRRMLEVEIDVLDKNNRLAERNRARFAARKQLVLNLVSSPGSGKTTLLTETLMRLKDSVPCAVIEGDQQTVNDAARIRATGTPAIQVNTGKGCHLDAQMIADAAPRLPLDDNGILFIENVGNLVCPASFDLGEKHKVAVLSVTEGEDKPLKYPHMFAAASLMLLNKVDLLPYLNFDVEKCIACAREVNPEIEIILISATSGEGMDQWLNWLETQRCA</sequence>
<proteinExistence type="evidence at protein level"/>
<feature type="chain" id="PRO_0000201440" description="Hydrogenase maturation factor HypB">
    <location>
        <begin position="1"/>
        <end position="290"/>
    </location>
</feature>
<feature type="region of interest" description="G-domain" evidence="10">
    <location>
        <begin position="106"/>
        <end position="267"/>
    </location>
</feature>
<feature type="binding site" evidence="11 12">
    <location>
        <position position="2"/>
    </location>
    <ligand>
        <name>Ni(2+)</name>
        <dbReference type="ChEBI" id="CHEBI:49786"/>
        <label>1</label>
    </ligand>
</feature>
<feature type="binding site" evidence="11 12">
    <location>
        <position position="5"/>
    </location>
    <ligand>
        <name>Ni(2+)</name>
        <dbReference type="ChEBI" id="CHEBI:49786"/>
        <label>1</label>
    </ligand>
</feature>
<feature type="binding site" evidence="11 12">
    <location>
        <position position="7"/>
    </location>
    <ligand>
        <name>Ni(2+)</name>
        <dbReference type="ChEBI" id="CHEBI:49786"/>
        <label>1</label>
    </ligand>
</feature>
<feature type="binding site" evidence="11 12">
    <location>
        <position position="166"/>
    </location>
    <ligand>
        <name>Ni(2+)</name>
        <dbReference type="ChEBI" id="CHEBI:49786"/>
        <label>2</label>
    </ligand>
</feature>
<feature type="binding site" evidence="11 12">
    <location>
        <position position="166"/>
    </location>
    <ligand>
        <name>Zn(2+)</name>
        <dbReference type="ChEBI" id="CHEBI:29105"/>
    </ligand>
</feature>
<feature type="binding site" evidence="11 12">
    <location>
        <position position="167"/>
    </location>
    <ligand>
        <name>Ni(2+)</name>
        <dbReference type="ChEBI" id="CHEBI:49786"/>
        <label>2</label>
    </ligand>
</feature>
<feature type="binding site" evidence="11 12">
    <location>
        <position position="167"/>
    </location>
    <ligand>
        <name>Zn(2+)</name>
        <dbReference type="ChEBI" id="CHEBI:29105"/>
    </ligand>
</feature>
<feature type="binding site" evidence="11">
    <location>
        <position position="198"/>
    </location>
    <ligand>
        <name>Ni(2+)</name>
        <dbReference type="ChEBI" id="CHEBI:49786"/>
        <label>2</label>
    </ligand>
</feature>
<feature type="binding site" evidence="11">
    <location>
        <position position="198"/>
    </location>
    <ligand>
        <name>Zn(2+)</name>
        <dbReference type="ChEBI" id="CHEBI:29105"/>
    </ligand>
</feature>
<feature type="mutagenesis site" description="Decreases nickel content. Disruption of the N-terminal metal-binding site; when associated with A-5 and A-7." evidence="3">
    <original>C</original>
    <variation>A</variation>
    <location>
        <position position="2"/>
    </location>
</feature>
<feature type="mutagenesis site" description="Decreases nickel content. Disruption of the N-terminal metal-binding site; when associated with A-3 and A-7." evidence="3">
    <original>C</original>
    <variation>A</variation>
    <location>
        <position position="5"/>
    </location>
</feature>
<feature type="mutagenesis site" description="Decreases nickel content. Decreases hydrogenase activity of the cell. Disruption of the N-terminal metal-binding site; when associated with A-3 and A-5." evidence="3 4">
    <original>C</original>
    <variation>A</variation>
    <location>
        <position position="7"/>
    </location>
</feature>
<feature type="mutagenesis site" description="Disrupts interaction with HypA. Can only partially restore hydrogenase production in a hypB deletion mutant." evidence="6">
    <original>LEV</original>
    <variation>AEA</variation>
    <location>
        <begin position="78"/>
        <end position="80"/>
    </location>
</feature>
<feature type="mutagenesis site" description="Important decrease in GTPase activity." evidence="8">
    <original>K</original>
    <variation>N</variation>
    <location>
        <position position="117"/>
    </location>
</feature>
<feature type="mutagenesis site" description="Does not affect nickel content. Mutant lacks hydrogenase activity." evidence="3 4">
    <original>C</original>
    <variation>A</variation>
    <location>
        <position position="166"/>
    </location>
</feature>
<feature type="mutagenesis site" description="Does not affect nickel content. Mutant lacks hydrogenase activity." evidence="3 4">
    <original>H</original>
    <variation>A</variation>
    <location>
        <position position="167"/>
    </location>
</feature>
<feature type="mutagenesis site" description="Does not affect nickel content." evidence="3">
    <original>C</original>
    <variation>A</variation>
    <location>
        <position position="198"/>
    </location>
</feature>
<feature type="mutagenesis site" description="85-fold decrease in kcat/KM value of GTPase activity and loss of the specificity for GTP." evidence="8">
    <original>D</original>
    <variation>N</variation>
    <location>
        <position position="241"/>
    </location>
</feature>
<feature type="mutagenesis site" description="Cannot form dimers. Can still bind metal in both sites and activate GTP hydrolysis, but hydrogenase activity of the cell is decreased; when associated with A-246." evidence="5">
    <original>L</original>
    <variation>A</variation>
    <location>
        <position position="242"/>
    </location>
</feature>
<feature type="mutagenesis site" description="Cannot form dimers. Can still bind metal in both sites and activate GTP hydrolysis, but hydrogenase activity of the cell is decreased; when associated with A-242." evidence="5">
    <original>L</original>
    <variation>A</variation>
    <location>
        <position position="246"/>
    </location>
</feature>
<feature type="sequence conflict" description="In Ref. 1; CAA38413." evidence="10" ref="1">
    <original>P</original>
    <variation>R</variation>
    <location>
        <position position="36"/>
    </location>
</feature>
<accession>P0AAN3</accession>
<accession>P24190</accession>
<accession>Q2MAA2</accession>
<accession>Q46884</accession>
<organism>
    <name type="scientific">Escherichia coli (strain K12)</name>
    <dbReference type="NCBI Taxonomy" id="83333"/>
    <lineage>
        <taxon>Bacteria</taxon>
        <taxon>Pseudomonadati</taxon>
        <taxon>Pseudomonadota</taxon>
        <taxon>Gammaproteobacteria</taxon>
        <taxon>Enterobacterales</taxon>
        <taxon>Enterobacteriaceae</taxon>
        <taxon>Escherichia</taxon>
    </lineage>
</organism>
<reference key="1">
    <citation type="journal article" date="1991" name="Mol. Microbiol.">
        <title>Molecular characterization of an operon (hyp) necessary for the activity of the three hydrogenase isoenzymes in Escherichia coli.</title>
        <authorList>
            <person name="Lutz S."/>
            <person name="Jacobi A."/>
            <person name="Schlensog V."/>
            <person name="Boehm R."/>
            <person name="Sawers G."/>
            <person name="Boeck A."/>
        </authorList>
    </citation>
    <scope>NUCLEOTIDE SEQUENCE [GENOMIC DNA]</scope>
</reference>
<reference key="2">
    <citation type="journal article" date="1997" name="Science">
        <title>The complete genome sequence of Escherichia coli K-12.</title>
        <authorList>
            <person name="Blattner F.R."/>
            <person name="Plunkett G. III"/>
            <person name="Bloch C.A."/>
            <person name="Perna N.T."/>
            <person name="Burland V."/>
            <person name="Riley M."/>
            <person name="Collado-Vides J."/>
            <person name="Glasner J.D."/>
            <person name="Rode C.K."/>
            <person name="Mayhew G.F."/>
            <person name="Gregor J."/>
            <person name="Davis N.W."/>
            <person name="Kirkpatrick H.A."/>
            <person name="Goeden M.A."/>
            <person name="Rose D.J."/>
            <person name="Mau B."/>
            <person name="Shao Y."/>
        </authorList>
    </citation>
    <scope>NUCLEOTIDE SEQUENCE [LARGE SCALE GENOMIC DNA]</scope>
    <source>
        <strain>K12 / MG1655 / ATCC 47076</strain>
    </source>
</reference>
<reference key="3">
    <citation type="journal article" date="2006" name="Mol. Syst. Biol.">
        <title>Highly accurate genome sequences of Escherichia coli K-12 strains MG1655 and W3110.</title>
        <authorList>
            <person name="Hayashi K."/>
            <person name="Morooka N."/>
            <person name="Yamamoto Y."/>
            <person name="Fujita K."/>
            <person name="Isono K."/>
            <person name="Choi S."/>
            <person name="Ohtsubo E."/>
            <person name="Baba T."/>
            <person name="Wanner B.L."/>
            <person name="Mori H."/>
            <person name="Horiuchi T."/>
        </authorList>
    </citation>
    <scope>NUCLEOTIDE SEQUENCE [LARGE SCALE GENOMIC DNA]</scope>
    <source>
        <strain>K12 / W3110 / ATCC 27325 / DSM 5911</strain>
    </source>
</reference>
<reference key="4">
    <citation type="journal article" date="1995" name="Eur. J. Biochem.">
        <title>GTP hydrolysis by HypB is essential for nickel insertion into hydrogenases of Escherichia coli.</title>
        <authorList>
            <person name="Maier T."/>
            <person name="Lottspeich F."/>
            <person name="Bock A."/>
        </authorList>
    </citation>
    <scope>PROTEIN SEQUENCE OF 27-31; 40-46 AND 76-81</scope>
    <scope>FUNCTION</scope>
    <scope>MUTAGENESIS OF LYS-117 AND ASP-241</scope>
</reference>
<reference key="5">
    <citation type="journal article" date="1996" name="Biochemistry">
        <title>Generation of active [NiFe] hydrogenase in vitro from a nickel-free precursor form.</title>
        <authorList>
            <person name="Maier T."/>
            <person name="Boeck A."/>
        </authorList>
    </citation>
    <scope>FUNCTION</scope>
    <source>
        <strain>K12 / MC4100 / ATCC 35695 / DSM 6574</strain>
    </source>
</reference>
<reference key="6">
    <citation type="journal article" date="1997" name="Electrophoresis">
        <title>Escherichia coli proteome analysis using the gene-protein database.</title>
        <authorList>
            <person name="VanBogelen R.A."/>
            <person name="Abshire K.Z."/>
            <person name="Moldover B."/>
            <person name="Olson E.R."/>
            <person name="Neidhardt F.C."/>
        </authorList>
    </citation>
    <scope>IDENTIFICATION BY 2D-GEL</scope>
</reference>
<reference key="7">
    <citation type="journal article" date="2005" name="Biochemistry">
        <title>Metal binding activity of the Escherichia coli hydrogenase maturation factor HypB.</title>
        <authorList>
            <person name="Leach M.R."/>
            <person name="Sandal S."/>
            <person name="Sun H."/>
            <person name="Zamble D.B."/>
        </authorList>
    </citation>
    <scope>DOMAIN</scope>
    <scope>METAL-BINDING</scope>
    <scope>MUTAGENESIS OF CYS-2; CYS-5; CYS-7; CYS-166; HIS-167 AND CYS-198</scope>
</reference>
<reference key="8">
    <citation type="journal article" date="2005" name="J. Bacteriol.">
        <title>Escherichia coli HypA is a zinc metalloprotein with a weak affinity for nickel.</title>
        <authorList>
            <person name="Atanassova A."/>
            <person name="Zamble D.B."/>
        </authorList>
    </citation>
    <scope>INTERACTION WITH HYPA</scope>
</reference>
<reference key="9">
    <citation type="journal article" date="2005" name="J. Biol. Chem.">
        <title>A role for SlyD in the Escherichia coli hydrogenase biosynthetic pathway.</title>
        <authorList>
            <person name="Zhang J.W."/>
            <person name="Butland G."/>
            <person name="Greenblatt J.F."/>
            <person name="Emili A."/>
            <person name="Zamble D.B."/>
        </authorList>
    </citation>
    <scope>INTERACTION WITH SLYD</scope>
</reference>
<reference key="10">
    <citation type="journal article" date="2008" name="Biochemistry">
        <title>Structural and biological analysis of the metal sites of Escherichia coli hydrogenase accessory protein HypB.</title>
        <authorList>
            <person name="Dias A.V."/>
            <person name="Mulvihill C.M."/>
            <person name="Leach M.R."/>
            <person name="Pickering I.J."/>
            <person name="George G.N."/>
            <person name="Zamble D.B."/>
        </authorList>
    </citation>
    <scope>DOMAIN</scope>
    <scope>METAL-BINDING</scope>
    <scope>MUTAGENESIS OF CYS-7; CYS-166 AND HIS-167</scope>
</reference>
<reference key="11">
    <citation type="journal article" date="2011" name="J. Biol. Inorg. Chem.">
        <title>Relationship between the GTPase, metal-binding, and dimerization activities of E. coli HypB.</title>
        <authorList>
            <person name="Cai F."/>
            <person name="Ngu T.T."/>
            <person name="Kaluarachchi H."/>
            <person name="Zamble D.B."/>
        </authorList>
    </citation>
    <scope>FUNCTION</scope>
    <scope>ACTIVITY REGULATION</scope>
    <scope>BIOPHYSICOCHEMICAL PROPERTIES</scope>
    <scope>SUBUNIT</scope>
    <scope>MUTAGENESIS OF LEU-242 AND LEU-246</scope>
</reference>
<reference key="12">
    <citation type="journal article" date="2013" name="Biochemistry">
        <title>Metal transfer within the Escherichia coli HypB-HypA complex of hydrogenase accessory proteins.</title>
        <authorList>
            <person name="Douglas C.D."/>
            <person name="Ngu T.T."/>
            <person name="Kaluarachchi H."/>
            <person name="Zamble D.B."/>
        </authorList>
    </citation>
    <scope>FUNCTION</scope>
    <scope>INTERACTION WITH HYPA</scope>
    <scope>MUTAGENESIS OF 78-LEU--VAL-80</scope>
</reference>
<reference key="13">
    <citation type="journal article" date="2016" name="Biochemistry">
        <title>Mechanism of selective nickel transfer from HypB to HypA, Escherichia coli [NiFe]-hydrogenase accessory proteins.</title>
        <authorList>
            <person name="Lacasse M.J."/>
            <person name="Douglas C.D."/>
            <person name="Zamble D.B."/>
        </authorList>
    </citation>
    <scope>FUNCTION</scope>
    <scope>ACTIVITY REGULATION</scope>
</reference>
<keyword id="KW-0903">Direct protein sequencing</keyword>
<keyword id="KW-0342">GTP-binding</keyword>
<keyword id="KW-0378">Hydrolase</keyword>
<keyword id="KW-0479">Metal-binding</keyword>
<keyword id="KW-0533">Nickel</keyword>
<keyword id="KW-0547">Nucleotide-binding</keyword>
<keyword id="KW-1185">Reference proteome</keyword>
<keyword id="KW-0862">Zinc</keyword>
<gene>
    <name type="primary">hypB</name>
    <name type="ordered locus">b2727</name>
    <name type="ordered locus">JW2697</name>
</gene>
<dbReference type="EMBL" id="X54543">
    <property type="protein sequence ID" value="CAA38413.1"/>
    <property type="molecule type" value="Genomic_DNA"/>
</dbReference>
<dbReference type="EMBL" id="U29579">
    <property type="protein sequence ID" value="AAA69237.1"/>
    <property type="molecule type" value="Genomic_DNA"/>
</dbReference>
<dbReference type="EMBL" id="U00096">
    <property type="protein sequence ID" value="AAC75769.1"/>
    <property type="molecule type" value="Genomic_DNA"/>
</dbReference>
<dbReference type="EMBL" id="AP009048">
    <property type="protein sequence ID" value="BAE76804.1"/>
    <property type="molecule type" value="Genomic_DNA"/>
</dbReference>
<dbReference type="PIR" id="C65053">
    <property type="entry name" value="C65053"/>
</dbReference>
<dbReference type="RefSeq" id="NP_417207.1">
    <property type="nucleotide sequence ID" value="NC_000913.3"/>
</dbReference>
<dbReference type="RefSeq" id="WP_000337665.1">
    <property type="nucleotide sequence ID" value="NZ_SSUR01000024.1"/>
</dbReference>
<dbReference type="SMR" id="P0AAN3"/>
<dbReference type="BioGRID" id="4261427">
    <property type="interactions" value="19"/>
</dbReference>
<dbReference type="ComplexPortal" id="CPX-5056">
    <property type="entry name" value="HypAB Ni-hydrogenase maturation complex"/>
</dbReference>
<dbReference type="DIP" id="DIP-36428N"/>
<dbReference type="FunCoup" id="P0AAN3">
    <property type="interactions" value="56"/>
</dbReference>
<dbReference type="IntAct" id="P0AAN3">
    <property type="interactions" value="9"/>
</dbReference>
<dbReference type="MINT" id="P0AAN3"/>
<dbReference type="STRING" id="511145.b2727"/>
<dbReference type="jPOST" id="P0AAN3"/>
<dbReference type="PaxDb" id="511145-b2727"/>
<dbReference type="EnsemblBacteria" id="AAC75769">
    <property type="protein sequence ID" value="AAC75769"/>
    <property type="gene ID" value="b2727"/>
</dbReference>
<dbReference type="GeneID" id="93779281"/>
<dbReference type="GeneID" id="947194"/>
<dbReference type="KEGG" id="ecj:JW2697"/>
<dbReference type="KEGG" id="eco:b2727"/>
<dbReference type="KEGG" id="ecoc:C3026_15005"/>
<dbReference type="PATRIC" id="fig|1411691.4.peg.4014"/>
<dbReference type="EchoBASE" id="EB0479"/>
<dbReference type="eggNOG" id="COG0378">
    <property type="taxonomic scope" value="Bacteria"/>
</dbReference>
<dbReference type="HOGENOM" id="CLU_056148_1_0_6"/>
<dbReference type="InParanoid" id="P0AAN3"/>
<dbReference type="OMA" id="NVGNMVC"/>
<dbReference type="OrthoDB" id="9802035at2"/>
<dbReference type="PhylomeDB" id="P0AAN3"/>
<dbReference type="BioCyc" id="EcoCyc:EG10484-MONOMER"/>
<dbReference type="BioCyc" id="MetaCyc:EG10484-MONOMER"/>
<dbReference type="PRO" id="PR:P0AAN3"/>
<dbReference type="Proteomes" id="UP000000625">
    <property type="component" value="Chromosome"/>
</dbReference>
<dbReference type="GO" id="GO:1905360">
    <property type="term" value="C:GTPase complex"/>
    <property type="evidence" value="ECO:0000353"/>
    <property type="project" value="ComplexPortal"/>
</dbReference>
<dbReference type="GO" id="GO:0005525">
    <property type="term" value="F:GTP binding"/>
    <property type="evidence" value="ECO:0007669"/>
    <property type="project" value="UniProtKB-KW"/>
</dbReference>
<dbReference type="GO" id="GO:0003924">
    <property type="term" value="F:GTPase activity"/>
    <property type="evidence" value="ECO:0000314"/>
    <property type="project" value="EcoCyc"/>
</dbReference>
<dbReference type="GO" id="GO:0097216">
    <property type="term" value="F:guanosine tetraphosphate binding"/>
    <property type="evidence" value="ECO:0000314"/>
    <property type="project" value="EcoCyc"/>
</dbReference>
<dbReference type="GO" id="GO:0016530">
    <property type="term" value="F:metallochaperone activity"/>
    <property type="evidence" value="ECO:0000315"/>
    <property type="project" value="EcoCyc"/>
</dbReference>
<dbReference type="GO" id="GO:0016151">
    <property type="term" value="F:nickel cation binding"/>
    <property type="evidence" value="ECO:0000314"/>
    <property type="project" value="EcoCyc"/>
</dbReference>
<dbReference type="GO" id="GO:0042803">
    <property type="term" value="F:protein homodimerization activity"/>
    <property type="evidence" value="ECO:0000314"/>
    <property type="project" value="EcoCyc"/>
</dbReference>
<dbReference type="GO" id="GO:0008270">
    <property type="term" value="F:zinc ion binding"/>
    <property type="evidence" value="ECO:0000314"/>
    <property type="project" value="EcoCyc"/>
</dbReference>
<dbReference type="GO" id="GO:0051604">
    <property type="term" value="P:protein maturation"/>
    <property type="evidence" value="ECO:0000318"/>
    <property type="project" value="GO_Central"/>
</dbReference>
<dbReference type="GO" id="GO:0065003">
    <property type="term" value="P:protein-containing complex assembly"/>
    <property type="evidence" value="ECO:0000303"/>
    <property type="project" value="ComplexPortal"/>
</dbReference>
<dbReference type="CDD" id="cd05390">
    <property type="entry name" value="HypB"/>
    <property type="match status" value="1"/>
</dbReference>
<dbReference type="FunFam" id="3.40.50.300:FF:000492">
    <property type="entry name" value="Hydrogenase nickel incorporation protein HypB"/>
    <property type="match status" value="1"/>
</dbReference>
<dbReference type="Gene3D" id="3.40.50.300">
    <property type="entry name" value="P-loop containing nucleotide triphosphate hydrolases"/>
    <property type="match status" value="1"/>
</dbReference>
<dbReference type="InterPro" id="IPR003495">
    <property type="entry name" value="CobW/HypB/UreG_nucleotide-bd"/>
</dbReference>
<dbReference type="InterPro" id="IPR004392">
    <property type="entry name" value="Hyd_mat_HypB"/>
</dbReference>
<dbReference type="InterPro" id="IPR027417">
    <property type="entry name" value="P-loop_NTPase"/>
</dbReference>
<dbReference type="NCBIfam" id="TIGR00073">
    <property type="entry name" value="hypB"/>
    <property type="match status" value="1"/>
</dbReference>
<dbReference type="NCBIfam" id="NF007775">
    <property type="entry name" value="PRK10463.1"/>
    <property type="match status" value="1"/>
</dbReference>
<dbReference type="PANTHER" id="PTHR30134:SF2">
    <property type="entry name" value="HYDROGENASE MATURATION FACTOR HYPB"/>
    <property type="match status" value="1"/>
</dbReference>
<dbReference type="PANTHER" id="PTHR30134">
    <property type="entry name" value="HYDROGENASE PROTEIN ASSEMBLY PROTEIN, NICKEL CHAPERONE"/>
    <property type="match status" value="1"/>
</dbReference>
<dbReference type="Pfam" id="PF02492">
    <property type="entry name" value="cobW"/>
    <property type="match status" value="1"/>
</dbReference>
<dbReference type="SUPFAM" id="SSF52540">
    <property type="entry name" value="P-loop containing nucleoside triphosphate hydrolases"/>
    <property type="match status" value="1"/>
</dbReference>
<protein>
    <recommendedName>
        <fullName evidence="10">Hydrogenase maturation factor HypB</fullName>
    </recommendedName>
    <alternativeName>
        <fullName evidence="10">Hydrogenase isoenzymes nickel incorporation protein HypB</fullName>
    </alternativeName>
</protein>